<dbReference type="EMBL" id="BC076951">
    <property type="protein sequence ID" value="AAH76951.1"/>
    <property type="molecule type" value="mRNA"/>
</dbReference>
<dbReference type="RefSeq" id="NP_001005059.1">
    <property type="nucleotide sequence ID" value="NM_001005059.1"/>
</dbReference>
<dbReference type="FunCoup" id="Q6DEZ2">
    <property type="interactions" value="4017"/>
</dbReference>
<dbReference type="PaxDb" id="8364-ENSXETP00000048821"/>
<dbReference type="GeneID" id="448612"/>
<dbReference type="KEGG" id="xtr:448612"/>
<dbReference type="AGR" id="Xenbase:XB-GENE-5767697"/>
<dbReference type="CTD" id="23196"/>
<dbReference type="Xenbase" id="XB-GENE-5767697">
    <property type="gene designation" value="fam120a"/>
</dbReference>
<dbReference type="eggNOG" id="ENOG502QQNQ">
    <property type="taxonomic scope" value="Eukaryota"/>
</dbReference>
<dbReference type="InParanoid" id="Q6DEZ2"/>
<dbReference type="OMA" id="YILSPQY"/>
<dbReference type="OrthoDB" id="10061469at2759"/>
<dbReference type="Proteomes" id="UP000008143">
    <property type="component" value="Chromosome 4"/>
</dbReference>
<dbReference type="GO" id="GO:0005737">
    <property type="term" value="C:cytoplasm"/>
    <property type="evidence" value="ECO:0007669"/>
    <property type="project" value="UniProtKB-SubCell"/>
</dbReference>
<dbReference type="GO" id="GO:0005886">
    <property type="term" value="C:plasma membrane"/>
    <property type="evidence" value="ECO:0007669"/>
    <property type="project" value="UniProtKB-SubCell"/>
</dbReference>
<dbReference type="GO" id="GO:0003723">
    <property type="term" value="F:RNA binding"/>
    <property type="evidence" value="ECO:0007669"/>
    <property type="project" value="UniProtKB-KW"/>
</dbReference>
<dbReference type="FunFam" id="3.40.50.1010:FF:000009">
    <property type="entry name" value="Constitutive coactivator of PPAR-gamma-like protein 1"/>
    <property type="match status" value="1"/>
</dbReference>
<dbReference type="Gene3D" id="3.40.50.1010">
    <property type="entry name" value="5'-nuclease"/>
    <property type="match status" value="1"/>
</dbReference>
<dbReference type="InterPro" id="IPR026784">
    <property type="entry name" value="Coact_PPARg"/>
</dbReference>
<dbReference type="InterPro" id="IPR029060">
    <property type="entry name" value="PIN-like_dom_sf"/>
</dbReference>
<dbReference type="PANTHER" id="PTHR15976">
    <property type="entry name" value="CONSTITUTIVE COACTIVATOR OF PEROXISOME PROLIFERATOR-ACTIVATED RECEPTOR GAMMA"/>
    <property type="match status" value="1"/>
</dbReference>
<dbReference type="PANTHER" id="PTHR15976:SF14">
    <property type="entry name" value="CONSTITUTIVE COACTIVATOR OF PPAR-GAMMA-LIKE PROTEIN 1"/>
    <property type="match status" value="1"/>
</dbReference>
<dbReference type="SUPFAM" id="SSF88723">
    <property type="entry name" value="PIN domain-like"/>
    <property type="match status" value="1"/>
</dbReference>
<accession>Q6DEZ2</accession>
<sequence length="1043" mass="115375">MGVQGFQEYMEKHCPSAVVPVELQKLARGSLVGGGRQRPPQSPLRLLVDAENCLHRLYGGFYTDWVSGGQWNHMLGYLGALAKACYAGNIQLFVFFNGALEKGRLHEWVKRQGNERQTAQQIVSHIQNKGTPPPKVWFLPPICMAHCIRLALLRFHIKVAQSIEDHHQEVITFCRENGFHGLVAYDSDYALCNIPYYFSAHALKLSRNGKSLTTSQYLMHEVAKQLDLNPNRFPIFAALLGNHILPDEDLAAFHWSLLGPEHPLASLKVRAHQLVLPPCDVVIKAVADYVRNIQDTNDLDAIAKDVFQHSQSRTDDKVSRFKKAIAYYRATNKPLSCPPAHYLGRPNPGGIHSMVPPYPSPQMLNIPQGSVQSRPMTGGKCVSEQNNYSNIPHEGKHTPLYERSSPINPAQSGSPNHVDSNYFPPSSASSSSENEDGNGGSANHVSGNKPTWDKGKKSEKANKKDSTEQAKAEVPSPSGSGNKGTDKKANQPGHMQIPCLLSMPTRNHMDITTPPLPQVAPEVLRVAEHRHKKGLMYPYIFHVLTKGEMKIPVTIEDEINKDLPPAAILYRPVRQYVYGVLFSLAESRKKAERLAFRKNRMPPEFYVPDYPVIIKEWAAYKGKSPQTPELVEALAFREWTCPNLKKLWLGKAVEDKNRRMRAFLACMRSDTPAMLNPANVPTHLMVLCCVLRYMVQWPGIRILRRQELDAFLAQAISPKLYEPDQLQELKIDNLDPRGIQLSALFMSGVDMAFLANDACGQPIPWEHCCPWMYFDGKLLQAKLNKATREKASLIDLCDGQVELATKVEKMRQSILEGLHFSRQNHPLPFPPPPAMPFYPAAMYPRPCGPMPPPQGRGRGFPGVQPMPSQGGKLEIAGTVVGQWAGTRRGRGRGPFPLQVVSVGGANRGRPRGVISTPIIRTFGRGGRYYGRGFKNQGPPQAKPPYATSAEEVAKELKTQSEDSKSSAVSSDGSLAENGLASEEAPASQMNGGSGEARASSNSESALSSDSKLCNTNPHLNALNADSVRHKEQPLEGAVANKEE</sequence>
<name>F120A_XENTR</name>
<feature type="chain" id="PRO_0000363781" description="Constitutive coactivator of PPAR-gamma-like protein 1 homolog">
    <location>
        <begin position="1"/>
        <end position="1043"/>
    </location>
</feature>
<feature type="region of interest" description="Disordered" evidence="2">
    <location>
        <begin position="353"/>
        <end position="497"/>
    </location>
</feature>
<feature type="region of interest" description="RNA binding" evidence="1">
    <location>
        <begin position="801"/>
        <end position="1043"/>
    </location>
</feature>
<feature type="region of interest" description="Disordered" evidence="2">
    <location>
        <begin position="929"/>
        <end position="1043"/>
    </location>
</feature>
<feature type="compositionally biased region" description="Polar residues" evidence="2">
    <location>
        <begin position="362"/>
        <end position="375"/>
    </location>
</feature>
<feature type="compositionally biased region" description="Polar residues" evidence="2">
    <location>
        <begin position="405"/>
        <end position="419"/>
    </location>
</feature>
<feature type="compositionally biased region" description="Basic and acidic residues" evidence="2">
    <location>
        <begin position="451"/>
        <end position="471"/>
    </location>
</feature>
<feature type="compositionally biased region" description="Basic and acidic residues" evidence="2">
    <location>
        <begin position="951"/>
        <end position="964"/>
    </location>
</feature>
<feature type="compositionally biased region" description="Low complexity" evidence="2">
    <location>
        <begin position="995"/>
        <end position="1010"/>
    </location>
</feature>
<evidence type="ECO:0000250" key="1"/>
<evidence type="ECO:0000256" key="2">
    <source>
        <dbReference type="SAM" id="MobiDB-lite"/>
    </source>
</evidence>
<evidence type="ECO:0000305" key="3"/>
<proteinExistence type="evidence at transcript level"/>
<keyword id="KW-1003">Cell membrane</keyword>
<keyword id="KW-0963">Cytoplasm</keyword>
<keyword id="KW-0472">Membrane</keyword>
<keyword id="KW-1185">Reference proteome</keyword>
<keyword id="KW-0694">RNA-binding</keyword>
<reference key="1">
    <citation type="submission" date="2004-07" db="EMBL/GenBank/DDBJ databases">
        <authorList>
            <consortium name="NIH - Xenopus Gene Collection (XGC) project"/>
        </authorList>
    </citation>
    <scope>NUCLEOTIDE SEQUENCE [LARGE SCALE MRNA]</scope>
    <source>
        <tissue>Embryo</tissue>
    </source>
</reference>
<gene>
    <name type="primary">fam120a</name>
</gene>
<protein>
    <recommendedName>
        <fullName>Constitutive coactivator of PPAR-gamma-like protein 1 homolog</fullName>
    </recommendedName>
    <alternativeName>
        <fullName>Protein FAM120A</fullName>
    </alternativeName>
</protein>
<organism>
    <name type="scientific">Xenopus tropicalis</name>
    <name type="common">Western clawed frog</name>
    <name type="synonym">Silurana tropicalis</name>
    <dbReference type="NCBI Taxonomy" id="8364"/>
    <lineage>
        <taxon>Eukaryota</taxon>
        <taxon>Metazoa</taxon>
        <taxon>Chordata</taxon>
        <taxon>Craniata</taxon>
        <taxon>Vertebrata</taxon>
        <taxon>Euteleostomi</taxon>
        <taxon>Amphibia</taxon>
        <taxon>Batrachia</taxon>
        <taxon>Anura</taxon>
        <taxon>Pipoidea</taxon>
        <taxon>Pipidae</taxon>
        <taxon>Xenopodinae</taxon>
        <taxon>Xenopus</taxon>
        <taxon>Silurana</taxon>
    </lineage>
</organism>
<comment type="function">
    <text evidence="1">May bee involved in the oxidative stress-induced survival signaling. Binds RNA. May participate in mRNA transport in the cytoplasm (By similarity).</text>
</comment>
<comment type="subcellular location">
    <subcellularLocation>
        <location evidence="1">Cytoplasm</location>
    </subcellularLocation>
    <subcellularLocation>
        <location evidence="1">Cell membrane</location>
        <topology evidence="1">Peripheral membrane protein</topology>
        <orientation evidence="1">Cytoplasmic side</orientation>
    </subcellularLocation>
</comment>
<comment type="similarity">
    <text evidence="3">Belongs to the constitutive coactivator of PPAR-gamma family.</text>
</comment>